<name>T2R14_GORGO</name>
<organism>
    <name type="scientific">Gorilla gorilla gorilla</name>
    <name type="common">Western lowland gorilla</name>
    <dbReference type="NCBI Taxonomy" id="9595"/>
    <lineage>
        <taxon>Eukaryota</taxon>
        <taxon>Metazoa</taxon>
        <taxon>Chordata</taxon>
        <taxon>Craniata</taxon>
        <taxon>Vertebrata</taxon>
        <taxon>Euteleostomi</taxon>
        <taxon>Mammalia</taxon>
        <taxon>Eutheria</taxon>
        <taxon>Euarchontoglires</taxon>
        <taxon>Primates</taxon>
        <taxon>Haplorrhini</taxon>
        <taxon>Catarrhini</taxon>
        <taxon>Hominidae</taxon>
        <taxon>Gorilla</taxon>
    </lineage>
</organism>
<reference key="1">
    <citation type="journal article" date="2005" name="Mol. Biol. Evol.">
        <title>Evolution of bitter taste receptors in humans and apes.</title>
        <authorList>
            <person name="Fischer A."/>
            <person name="Gilad Y."/>
            <person name="Man O."/>
            <person name="Paeaebo S."/>
        </authorList>
    </citation>
    <scope>NUCLEOTIDE SEQUENCE [GENOMIC DNA]</scope>
</reference>
<dbReference type="EMBL" id="AY724920">
    <property type="protein sequence ID" value="AAU21127.1"/>
    <property type="molecule type" value="Genomic_DNA"/>
</dbReference>
<dbReference type="FunCoup" id="Q645Z2">
    <property type="interactions" value="422"/>
</dbReference>
<dbReference type="STRING" id="9593.ENSGGOP00000006551"/>
<dbReference type="GlyCosmos" id="Q645Z2">
    <property type="glycosylation" value="3 sites, No reported glycans"/>
</dbReference>
<dbReference type="eggNOG" id="ENOG502SKRK">
    <property type="taxonomic scope" value="Eukaryota"/>
</dbReference>
<dbReference type="InParanoid" id="Q645Z2"/>
<dbReference type="Proteomes" id="UP000001519">
    <property type="component" value="Unplaced"/>
</dbReference>
<dbReference type="GO" id="GO:0016020">
    <property type="term" value="C:membrane"/>
    <property type="evidence" value="ECO:0000318"/>
    <property type="project" value="GO_Central"/>
</dbReference>
<dbReference type="GO" id="GO:0005886">
    <property type="term" value="C:plasma membrane"/>
    <property type="evidence" value="ECO:0007669"/>
    <property type="project" value="UniProtKB-ARBA"/>
</dbReference>
<dbReference type="GO" id="GO:0033038">
    <property type="term" value="F:bitter taste receptor activity"/>
    <property type="evidence" value="ECO:0000318"/>
    <property type="project" value="GO_Central"/>
</dbReference>
<dbReference type="GO" id="GO:0004930">
    <property type="term" value="F:G protein-coupled receptor activity"/>
    <property type="evidence" value="ECO:0007669"/>
    <property type="project" value="UniProtKB-KW"/>
</dbReference>
<dbReference type="GO" id="GO:0001580">
    <property type="term" value="P:detection of chemical stimulus involved in sensory perception of bitter taste"/>
    <property type="evidence" value="ECO:0000318"/>
    <property type="project" value="GO_Central"/>
</dbReference>
<dbReference type="CDD" id="cd15019">
    <property type="entry name" value="7tm_TAS2R14-like"/>
    <property type="match status" value="1"/>
</dbReference>
<dbReference type="FunFam" id="1.20.1070.10:FF:000042">
    <property type="entry name" value="Taste receptor type 2 member 7"/>
    <property type="match status" value="1"/>
</dbReference>
<dbReference type="Gene3D" id="1.20.1070.10">
    <property type="entry name" value="Rhodopsin 7-helix transmembrane proteins"/>
    <property type="match status" value="1"/>
</dbReference>
<dbReference type="InterPro" id="IPR007960">
    <property type="entry name" value="TAS2R"/>
</dbReference>
<dbReference type="PANTHER" id="PTHR11394">
    <property type="entry name" value="TASTE RECEPTOR TYPE 2"/>
    <property type="match status" value="1"/>
</dbReference>
<dbReference type="PANTHER" id="PTHR11394:SF23">
    <property type="entry name" value="TASTE RECEPTOR TYPE 2 MEMBER 14"/>
    <property type="match status" value="1"/>
</dbReference>
<dbReference type="Pfam" id="PF05296">
    <property type="entry name" value="TAS2R"/>
    <property type="match status" value="1"/>
</dbReference>
<dbReference type="SUPFAM" id="SSF81321">
    <property type="entry name" value="Family A G protein-coupled receptor-like"/>
    <property type="match status" value="1"/>
</dbReference>
<accession>Q645Z2</accession>
<proteinExistence type="inferred from homology"/>
<gene>
    <name type="primary">TAS2R14</name>
</gene>
<feature type="chain" id="PRO_0000082254" description="Taste receptor type 2 member 14">
    <location>
        <begin position="1"/>
        <end position="317"/>
    </location>
</feature>
<feature type="topological domain" description="Extracellular" evidence="1">
    <location>
        <begin position="1"/>
        <end position="7"/>
    </location>
</feature>
<feature type="transmembrane region" description="Helical; Name=1" evidence="1">
    <location>
        <begin position="8"/>
        <end position="28"/>
    </location>
</feature>
<feature type="topological domain" description="Cytoplasmic" evidence="1">
    <location>
        <begin position="29"/>
        <end position="55"/>
    </location>
</feature>
<feature type="transmembrane region" description="Helical; Name=2" evidence="1">
    <location>
        <begin position="56"/>
        <end position="76"/>
    </location>
</feature>
<feature type="topological domain" description="Extracellular" evidence="1">
    <location>
        <begin position="77"/>
        <end position="87"/>
    </location>
</feature>
<feature type="transmembrane region" description="Helical; Name=3" evidence="1">
    <location>
        <begin position="88"/>
        <end position="108"/>
    </location>
</feature>
<feature type="topological domain" description="Cytoplasmic" evidence="1">
    <location>
        <begin position="109"/>
        <end position="129"/>
    </location>
</feature>
<feature type="transmembrane region" description="Helical; Name=4" evidence="1">
    <location>
        <begin position="130"/>
        <end position="150"/>
    </location>
</feature>
<feature type="topological domain" description="Extracellular" evidence="1">
    <location>
        <begin position="151"/>
        <end position="184"/>
    </location>
</feature>
<feature type="transmembrane region" description="Helical; Name=5" evidence="1">
    <location>
        <begin position="185"/>
        <end position="205"/>
    </location>
</feature>
<feature type="topological domain" description="Cytoplasmic" evidence="1">
    <location>
        <begin position="206"/>
        <end position="232"/>
    </location>
</feature>
<feature type="transmembrane region" description="Helical; Name=6" evidence="1">
    <location>
        <begin position="233"/>
        <end position="253"/>
    </location>
</feature>
<feature type="topological domain" description="Extracellular" evidence="1">
    <location>
        <begin position="254"/>
        <end position="261"/>
    </location>
</feature>
<feature type="transmembrane region" description="Helical; Name=7" evidence="1">
    <location>
        <begin position="262"/>
        <end position="282"/>
    </location>
</feature>
<feature type="topological domain" description="Cytoplasmic" evidence="1">
    <location>
        <begin position="283"/>
        <end position="317"/>
    </location>
</feature>
<feature type="binding site" evidence="1">
    <location>
        <position position="86"/>
    </location>
    <ligand>
        <name>cholesterol</name>
        <dbReference type="ChEBI" id="CHEBI:16113"/>
    </ligand>
</feature>
<feature type="binding site" evidence="1">
    <location>
        <position position="89"/>
    </location>
    <ligand>
        <name>cholesterol</name>
        <dbReference type="ChEBI" id="CHEBI:16113"/>
    </ligand>
</feature>
<feature type="binding site" evidence="1">
    <location>
        <position position="180"/>
    </location>
    <ligand>
        <name>cholesterol</name>
        <dbReference type="ChEBI" id="CHEBI:16113"/>
    </ligand>
</feature>
<feature type="binding site" evidence="1">
    <location>
        <position position="265"/>
    </location>
    <ligand>
        <name>cholesterol</name>
        <dbReference type="ChEBI" id="CHEBI:16113"/>
    </ligand>
</feature>
<feature type="binding site" evidence="1">
    <location>
        <position position="268"/>
    </location>
    <ligand>
        <name>cholesterol</name>
        <dbReference type="ChEBI" id="CHEBI:16113"/>
    </ligand>
</feature>
<feature type="glycosylation site" description="N-linked (GlcNAc...) asparagine" evidence="2">
    <location>
        <position position="153"/>
    </location>
</feature>
<feature type="glycosylation site" description="N-linked (GlcNAc...) asparagine" evidence="2">
    <location>
        <position position="162"/>
    </location>
</feature>
<feature type="glycosylation site" description="N-linked (GlcNAc...) asparagine" evidence="2">
    <location>
        <position position="171"/>
    </location>
</feature>
<sequence>MGDVIKSIFTFVLIVEFIIGNLGNSFIALVNCIDWVKGRKISSVDQILTALAISRISLVWLIFGSWCVSVFLPALFATEKMFRMLTNIWTVINHFSVWLATGLGTFYFLKIANFSNSIFLYLKWRVKKVVLVLLLVTSVFLFLNIALINIHINASINGYRRNKTCSSDSSNFTRFSSLIVLTSTVFIFIPFTLSLAMFLLLIFSLWKHRKKMQHXVKRSGDASTKAHRGVKSVITFFLLYAIFCLSFFISVWTSERLEENLIILSQVMGMAYPSCHSCVLILGNKKLRQASLSVLLWLRYMFKDGEPSGHKEFRESS</sequence>
<protein>
    <recommendedName>
        <fullName>Taste receptor type 2 member 14</fullName>
        <shortName>T2R14</shortName>
    </recommendedName>
</protein>
<comment type="function">
    <text evidence="1">Gustducin-linked G-protein coupled receptor that plays a role in the perception of bitterness (By similarity). The activity of this receptor stimulates GNAT3, activating the gustducin G-protein pathway (By similarity). Likely plays a role in sensing the chemical composition of the gastrointestinal content and other extra-oral tissues via the inhibitory G-protein pathways (By similarity).</text>
</comment>
<comment type="catalytic activity">
    <reaction evidence="1">
        <text>Ca(2+)(in) = Ca(2+)(out)</text>
        <dbReference type="Rhea" id="RHEA:29671"/>
        <dbReference type="ChEBI" id="CHEBI:29108"/>
    </reaction>
</comment>
<comment type="catalytic activity">
    <reaction evidence="1">
        <text>3',5'-cyclic AMP(in) = 3',5'-cyclic AMP(out)</text>
        <dbReference type="Rhea" id="RHEA:76223"/>
        <dbReference type="ChEBI" id="CHEBI:58165"/>
    </reaction>
</comment>
<comment type="activity regulation">
    <text evidence="1">Basal activity is enhanced by binding to bitter tastants, such as flufenamic acid and aristolochic acid (By similarity). Regulated by cholesterol in a concentration-dependent manner (By similarity).</text>
</comment>
<comment type="subunit">
    <text evidence="1">Core component of the TAS2R14-GNAI1 complex, consisting of TAS2R14, GNAI1, GNB1 and GNG2; within the complex interacts with GNAI1 (By similarity). Core component of the TAS2R14-GNAT3 complex, consisting of TAS2R14, GNAT3, GNB1 and GNG2; within the complex interacts with GNAT3 (By similarity). Core component of the TAS2R14-GNAS2 complex, consisting of TAS2R14, GNAS2, GNB1 and GNG2; within the complex interacts with GNAS2 (By similarity).</text>
</comment>
<comment type="subcellular location">
    <subcellularLocation>
        <location>Membrane</location>
        <topology evidence="1">Multi-pass membrane protein</topology>
    </subcellularLocation>
</comment>
<comment type="miscellaneous">
    <text>Most taste cells may be activated by a limited number of bitter compounds; individual taste cells can discriminate among bitter stimuli.</text>
</comment>
<comment type="similarity">
    <text evidence="3">Belongs to the G-protein coupled receptor T2R family.</text>
</comment>
<keyword id="KW-0297">G-protein coupled receptor</keyword>
<keyword id="KW-0325">Glycoprotein</keyword>
<keyword id="KW-0472">Membrane</keyword>
<keyword id="KW-0675">Receptor</keyword>
<keyword id="KW-1185">Reference proteome</keyword>
<keyword id="KW-0716">Sensory transduction</keyword>
<keyword id="KW-0919">Taste</keyword>
<keyword id="KW-0807">Transducer</keyword>
<keyword id="KW-0812">Transmembrane</keyword>
<keyword id="KW-1133">Transmembrane helix</keyword>
<evidence type="ECO:0000250" key="1">
    <source>
        <dbReference type="UniProtKB" id="Q9NYV8"/>
    </source>
</evidence>
<evidence type="ECO:0000255" key="2"/>
<evidence type="ECO:0000305" key="3"/>